<gene>
    <name type="primary">SRSF12</name>
    <name type="synonym">SFRS13B</name>
    <name type="synonym">SFRS19</name>
    <name type="synonym">SRRP35</name>
</gene>
<feature type="chain" id="PRO_0000081960" description="Serine/arginine-rich splicing factor 12">
    <location>
        <begin position="1"/>
        <end position="261"/>
    </location>
</feature>
<feature type="domain" description="RRM" evidence="1">
    <location>
        <begin position="10"/>
        <end position="88"/>
    </location>
</feature>
<feature type="region of interest" description="Disordered" evidence="2">
    <location>
        <begin position="86"/>
        <end position="261"/>
    </location>
</feature>
<feature type="compositionally biased region" description="Basic and acidic residues" evidence="2">
    <location>
        <begin position="88"/>
        <end position="109"/>
    </location>
</feature>
<feature type="compositionally biased region" description="Basic residues" evidence="2">
    <location>
        <begin position="110"/>
        <end position="122"/>
    </location>
</feature>
<feature type="compositionally biased region" description="Basic residues" evidence="2">
    <location>
        <begin position="178"/>
        <end position="191"/>
    </location>
</feature>
<feature type="compositionally biased region" description="Low complexity" evidence="2">
    <location>
        <begin position="192"/>
        <end position="209"/>
    </location>
</feature>
<feature type="compositionally biased region" description="Polar residues" evidence="2">
    <location>
        <begin position="230"/>
        <end position="239"/>
    </location>
</feature>
<feature type="compositionally biased region" description="Basic residues" evidence="2">
    <location>
        <begin position="240"/>
        <end position="261"/>
    </location>
</feature>
<feature type="sequence conflict" description="In Ref. 5; AAH21715." evidence="4" ref="5">
    <original>D</original>
    <variation>G</variation>
    <location>
        <position position="63"/>
    </location>
</feature>
<feature type="sequence conflict" description="In Ref. 5; AAH21715." evidence="4" ref="5">
    <original>Q</original>
    <variation>K</variation>
    <location>
        <position position="149"/>
    </location>
</feature>
<comment type="function">
    <text evidence="3">Splicing factor that seems to antagonize SR proteins in pre-mRNA splicing regulation.</text>
</comment>
<comment type="interaction">
    <interactant intactId="EBI-5278477">
        <id>Q8WXF0</id>
    </interactant>
    <interactant intactId="EBI-593303">
        <id>P78362</id>
        <label>SRPK2</label>
    </interactant>
    <organismsDiffer>false</organismsDiffer>
    <experiments>2</experiments>
</comment>
<comment type="subcellular location">
    <subcellularLocation>
        <location evidence="4">Nucleus</location>
    </subcellularLocation>
</comment>
<comment type="tissue specificity">
    <text evidence="3">Expressed in testis.</text>
</comment>
<comment type="similarity">
    <text evidence="4">Belongs to the splicing factor SR family.</text>
</comment>
<comment type="sequence caution" evidence="4">
    <conflict type="erroneous gene model prediction">
        <sequence resource="EMBL-CDS" id="EAW48561"/>
    </conflict>
</comment>
<dbReference type="EMBL" id="AF449428">
    <property type="protein sequence ID" value="AAL57515.1"/>
    <property type="molecule type" value="mRNA"/>
</dbReference>
<dbReference type="EMBL" id="AL353135">
    <property type="status" value="NOT_ANNOTATED_CDS"/>
    <property type="molecule type" value="Genomic_DNA"/>
</dbReference>
<dbReference type="EMBL" id="CH471051">
    <property type="protein sequence ID" value="EAW48561.1"/>
    <property type="status" value="ALT_SEQ"/>
    <property type="molecule type" value="Genomic_DNA"/>
</dbReference>
<dbReference type="EMBL" id="AK314008">
    <property type="protein sequence ID" value="BAG36719.1"/>
    <property type="molecule type" value="mRNA"/>
</dbReference>
<dbReference type="EMBL" id="BC021715">
    <property type="protein sequence ID" value="AAH21715.1"/>
    <property type="molecule type" value="mRNA"/>
</dbReference>
<dbReference type="CCDS" id="CCDS47459.1"/>
<dbReference type="RefSeq" id="NP_542781.3">
    <property type="nucleotide sequence ID" value="NM_080743.4"/>
</dbReference>
<dbReference type="RefSeq" id="XP_016865781.1">
    <property type="nucleotide sequence ID" value="XM_017010292.1"/>
</dbReference>
<dbReference type="SMR" id="Q8WXF0"/>
<dbReference type="BioGRID" id="126428">
    <property type="interactions" value="131"/>
</dbReference>
<dbReference type="FunCoup" id="Q8WXF0">
    <property type="interactions" value="906"/>
</dbReference>
<dbReference type="IntAct" id="Q8WXF0">
    <property type="interactions" value="70"/>
</dbReference>
<dbReference type="MINT" id="Q8WXF0"/>
<dbReference type="STRING" id="9606.ENSP00000414302"/>
<dbReference type="GlyGen" id="Q8WXF0">
    <property type="glycosylation" value="1 site, 1 O-linked glycan (1 site)"/>
</dbReference>
<dbReference type="iPTMnet" id="Q8WXF0"/>
<dbReference type="PhosphoSitePlus" id="Q8WXF0"/>
<dbReference type="SwissPalm" id="Q8WXF0"/>
<dbReference type="BioMuta" id="SRSF12"/>
<dbReference type="DMDM" id="47606193"/>
<dbReference type="jPOST" id="Q8WXF0"/>
<dbReference type="MassIVE" id="Q8WXF0"/>
<dbReference type="PaxDb" id="9606-ENSP00000414302"/>
<dbReference type="PeptideAtlas" id="Q8WXF0"/>
<dbReference type="ProteomicsDB" id="75022"/>
<dbReference type="Pumba" id="Q8WXF0"/>
<dbReference type="Antibodypedia" id="54701">
    <property type="antibodies" value="26 antibodies from 12 providers"/>
</dbReference>
<dbReference type="DNASU" id="135295"/>
<dbReference type="Ensembl" id="ENST00000452027.3">
    <property type="protein sequence ID" value="ENSP00000414302.2"/>
    <property type="gene ID" value="ENSG00000154548.10"/>
</dbReference>
<dbReference type="GeneID" id="135295"/>
<dbReference type="KEGG" id="hsa:135295"/>
<dbReference type="MANE-Select" id="ENST00000452027.3">
    <property type="protein sequence ID" value="ENSP00000414302.2"/>
    <property type="RefSeq nucleotide sequence ID" value="NM_080743.5"/>
    <property type="RefSeq protein sequence ID" value="NP_542781.3"/>
</dbReference>
<dbReference type="UCSC" id="uc063qaq.1">
    <property type="organism name" value="human"/>
</dbReference>
<dbReference type="AGR" id="HGNC:21220"/>
<dbReference type="CTD" id="135295"/>
<dbReference type="DisGeNET" id="135295"/>
<dbReference type="GeneCards" id="SRSF12"/>
<dbReference type="HGNC" id="HGNC:21220">
    <property type="gene designation" value="SRSF12"/>
</dbReference>
<dbReference type="HPA" id="ENSG00000154548">
    <property type="expression patterns" value="Tissue enhanced (testis)"/>
</dbReference>
<dbReference type="neXtProt" id="NX_Q8WXF0"/>
<dbReference type="OpenTargets" id="ENSG00000154548"/>
<dbReference type="PharmGKB" id="PA165618223"/>
<dbReference type="VEuPathDB" id="HostDB:ENSG00000154548"/>
<dbReference type="eggNOG" id="KOG0118">
    <property type="taxonomic scope" value="Eukaryota"/>
</dbReference>
<dbReference type="GeneTree" id="ENSGT00940000160519"/>
<dbReference type="HOGENOM" id="CLU_012062_10_2_1"/>
<dbReference type="InParanoid" id="Q8WXF0"/>
<dbReference type="OMA" id="CSPADHR"/>
<dbReference type="OrthoDB" id="439808at2759"/>
<dbReference type="PAN-GO" id="Q8WXF0">
    <property type="GO annotations" value="4 GO annotations based on evolutionary models"/>
</dbReference>
<dbReference type="PhylomeDB" id="Q8WXF0"/>
<dbReference type="TreeFam" id="TF351864"/>
<dbReference type="PathwayCommons" id="Q8WXF0"/>
<dbReference type="Reactome" id="R-HSA-72163">
    <property type="pathway name" value="mRNA Splicing - Major Pathway"/>
</dbReference>
<dbReference type="Reactome" id="R-HSA-72203">
    <property type="pathway name" value="Processing of Capped Intron-Containing Pre-mRNA"/>
</dbReference>
<dbReference type="SignaLink" id="Q8WXF0"/>
<dbReference type="BioGRID-ORCS" id="135295">
    <property type="hits" value="9 hits in 1146 CRISPR screens"/>
</dbReference>
<dbReference type="CD-CODE" id="232F8A39">
    <property type="entry name" value="P-body"/>
</dbReference>
<dbReference type="GenomeRNAi" id="135295"/>
<dbReference type="Pharos" id="Q8WXF0">
    <property type="development level" value="Tbio"/>
</dbReference>
<dbReference type="PRO" id="PR:Q8WXF0"/>
<dbReference type="Proteomes" id="UP000005640">
    <property type="component" value="Chromosome 6"/>
</dbReference>
<dbReference type="RNAct" id="Q8WXF0">
    <property type="molecule type" value="protein"/>
</dbReference>
<dbReference type="Bgee" id="ENSG00000154548">
    <property type="expression patterns" value="Expressed in primordial germ cell in gonad and 117 other cell types or tissues"/>
</dbReference>
<dbReference type="ExpressionAtlas" id="Q8WXF0">
    <property type="expression patterns" value="baseline and differential"/>
</dbReference>
<dbReference type="GO" id="GO:0016607">
    <property type="term" value="C:nuclear speck"/>
    <property type="evidence" value="ECO:0000318"/>
    <property type="project" value="GO_Central"/>
</dbReference>
<dbReference type="GO" id="GO:0005654">
    <property type="term" value="C:nucleoplasm"/>
    <property type="evidence" value="ECO:0000250"/>
    <property type="project" value="UniProtKB"/>
</dbReference>
<dbReference type="GO" id="GO:0003723">
    <property type="term" value="F:RNA binding"/>
    <property type="evidence" value="ECO:0007005"/>
    <property type="project" value="UniProtKB"/>
</dbReference>
<dbReference type="GO" id="GO:0050733">
    <property type="term" value="F:RS domain binding"/>
    <property type="evidence" value="ECO:0000303"/>
    <property type="project" value="UniProtKB"/>
</dbReference>
<dbReference type="GO" id="GO:0051082">
    <property type="term" value="F:unfolded protein binding"/>
    <property type="evidence" value="ECO:0000303"/>
    <property type="project" value="UniProtKB"/>
</dbReference>
<dbReference type="GO" id="GO:0000395">
    <property type="term" value="P:mRNA 5'-splice site recognition"/>
    <property type="evidence" value="ECO:0000314"/>
    <property type="project" value="UniProtKB"/>
</dbReference>
<dbReference type="GO" id="GO:0000398">
    <property type="term" value="P:mRNA splicing, via spliceosome"/>
    <property type="evidence" value="ECO:0000318"/>
    <property type="project" value="GO_Central"/>
</dbReference>
<dbReference type="GO" id="GO:0048025">
    <property type="term" value="P:negative regulation of mRNA splicing, via spliceosome"/>
    <property type="evidence" value="ECO:0000250"/>
    <property type="project" value="UniProtKB"/>
</dbReference>
<dbReference type="GO" id="GO:0000381">
    <property type="term" value="P:regulation of alternative mRNA splicing, via spliceosome"/>
    <property type="evidence" value="ECO:0000314"/>
    <property type="project" value="UniProtKB"/>
</dbReference>
<dbReference type="GO" id="GO:0000244">
    <property type="term" value="P:spliceosomal tri-snRNP complex assembly"/>
    <property type="evidence" value="ECO:0000303"/>
    <property type="project" value="UniProtKB"/>
</dbReference>
<dbReference type="CDD" id="cd12312">
    <property type="entry name" value="RRM_SRSF10_SRSF12"/>
    <property type="match status" value="1"/>
</dbReference>
<dbReference type="FunFam" id="3.30.70.330:FF:000422">
    <property type="entry name" value="serine/arginine-rich splicing factor 12"/>
    <property type="match status" value="1"/>
</dbReference>
<dbReference type="Gene3D" id="3.30.70.330">
    <property type="match status" value="1"/>
</dbReference>
<dbReference type="InterPro" id="IPR012677">
    <property type="entry name" value="Nucleotide-bd_a/b_plait_sf"/>
</dbReference>
<dbReference type="InterPro" id="IPR035979">
    <property type="entry name" value="RBD_domain_sf"/>
</dbReference>
<dbReference type="InterPro" id="IPR050441">
    <property type="entry name" value="RBM"/>
</dbReference>
<dbReference type="InterPro" id="IPR000504">
    <property type="entry name" value="RRM_dom"/>
</dbReference>
<dbReference type="PANTHER" id="PTHR48034">
    <property type="entry name" value="TRANSFORMER-2 SEX-DETERMINING PROTEIN-RELATED"/>
    <property type="match status" value="1"/>
</dbReference>
<dbReference type="Pfam" id="PF00076">
    <property type="entry name" value="RRM_1"/>
    <property type="match status" value="1"/>
</dbReference>
<dbReference type="SMART" id="SM00360">
    <property type="entry name" value="RRM"/>
    <property type="match status" value="1"/>
</dbReference>
<dbReference type="SUPFAM" id="SSF54928">
    <property type="entry name" value="RNA-binding domain, RBD"/>
    <property type="match status" value="1"/>
</dbReference>
<dbReference type="PROSITE" id="PS50102">
    <property type="entry name" value="RRM"/>
    <property type="match status" value="1"/>
</dbReference>
<accession>Q8WXF0</accession>
<accession>B2RA22</accession>
<accession>Q5T7K0</accession>
<accession>Q8WW25</accession>
<evidence type="ECO:0000255" key="1">
    <source>
        <dbReference type="PROSITE-ProRule" id="PRU00176"/>
    </source>
</evidence>
<evidence type="ECO:0000256" key="2">
    <source>
        <dbReference type="SAM" id="MobiDB-lite"/>
    </source>
</evidence>
<evidence type="ECO:0000269" key="3">
    <source>
    </source>
</evidence>
<evidence type="ECO:0000305" key="4"/>
<sequence>MSRYTRPPNTSLFIRNVADATRPEDLRREFGRYGPIVDVYIPLDFYTRRPRGFAYVQFEDVRDAEDALYNLNRKWVCGRQIEIQFAQGDRKTPGQMKSKERHPCSPSDHRRSRSPSQRRTRSRSSSWGRNRRRSDSLKESRHRRFSYSQSKSRSKSLPRRSTSARQSRTPRRNFGSRGRSRSKSLQKRSKSIGKSQSSSPQKQTSSGTKSRSHGRHSDSIARSPCKSPKGYTNSETKVQTAKHSHFRSHSRSRSYRHKNSW</sequence>
<organism>
    <name type="scientific">Homo sapiens</name>
    <name type="common">Human</name>
    <dbReference type="NCBI Taxonomy" id="9606"/>
    <lineage>
        <taxon>Eukaryota</taxon>
        <taxon>Metazoa</taxon>
        <taxon>Chordata</taxon>
        <taxon>Craniata</taxon>
        <taxon>Vertebrata</taxon>
        <taxon>Euteleostomi</taxon>
        <taxon>Mammalia</taxon>
        <taxon>Eutheria</taxon>
        <taxon>Euarchontoglires</taxon>
        <taxon>Primates</taxon>
        <taxon>Haplorrhini</taxon>
        <taxon>Catarrhini</taxon>
        <taxon>Hominidae</taxon>
        <taxon>Homo</taxon>
    </lineage>
</organism>
<proteinExistence type="evidence at protein level"/>
<reference key="1">
    <citation type="journal article" date="2001" name="J. Biol. Chem.">
        <title>Serine-arginine (SR) protein-like factors that antagonize authentic SR proteins and regulate alternative splicing.</title>
        <authorList>
            <person name="Cowper A.E."/>
            <person name="Caceres J.F."/>
            <person name="Mayeda A."/>
            <person name="Screaton G.R."/>
        </authorList>
    </citation>
    <scope>NUCLEOTIDE SEQUENCE [MRNA]</scope>
    <scope>FUNCTION</scope>
    <scope>TISSUE SPECIFICITY</scope>
</reference>
<reference key="2">
    <citation type="journal article" date="2004" name="Nat. Genet.">
        <title>Complete sequencing and characterization of 21,243 full-length human cDNAs.</title>
        <authorList>
            <person name="Ota T."/>
            <person name="Suzuki Y."/>
            <person name="Nishikawa T."/>
            <person name="Otsuki T."/>
            <person name="Sugiyama T."/>
            <person name="Irie R."/>
            <person name="Wakamatsu A."/>
            <person name="Hayashi K."/>
            <person name="Sato H."/>
            <person name="Nagai K."/>
            <person name="Kimura K."/>
            <person name="Makita H."/>
            <person name="Sekine M."/>
            <person name="Obayashi M."/>
            <person name="Nishi T."/>
            <person name="Shibahara T."/>
            <person name="Tanaka T."/>
            <person name="Ishii S."/>
            <person name="Yamamoto J."/>
            <person name="Saito K."/>
            <person name="Kawai Y."/>
            <person name="Isono Y."/>
            <person name="Nakamura Y."/>
            <person name="Nagahari K."/>
            <person name="Murakami K."/>
            <person name="Yasuda T."/>
            <person name="Iwayanagi T."/>
            <person name="Wagatsuma M."/>
            <person name="Shiratori A."/>
            <person name="Sudo H."/>
            <person name="Hosoiri T."/>
            <person name="Kaku Y."/>
            <person name="Kodaira H."/>
            <person name="Kondo H."/>
            <person name="Sugawara M."/>
            <person name="Takahashi M."/>
            <person name="Kanda K."/>
            <person name="Yokoi T."/>
            <person name="Furuya T."/>
            <person name="Kikkawa E."/>
            <person name="Omura Y."/>
            <person name="Abe K."/>
            <person name="Kamihara K."/>
            <person name="Katsuta N."/>
            <person name="Sato K."/>
            <person name="Tanikawa M."/>
            <person name="Yamazaki M."/>
            <person name="Ninomiya K."/>
            <person name="Ishibashi T."/>
            <person name="Yamashita H."/>
            <person name="Murakawa K."/>
            <person name="Fujimori K."/>
            <person name="Tanai H."/>
            <person name="Kimata M."/>
            <person name="Watanabe M."/>
            <person name="Hiraoka S."/>
            <person name="Chiba Y."/>
            <person name="Ishida S."/>
            <person name="Ono Y."/>
            <person name="Takiguchi S."/>
            <person name="Watanabe S."/>
            <person name="Yosida M."/>
            <person name="Hotuta T."/>
            <person name="Kusano J."/>
            <person name="Kanehori K."/>
            <person name="Takahashi-Fujii A."/>
            <person name="Hara H."/>
            <person name="Tanase T.-O."/>
            <person name="Nomura Y."/>
            <person name="Togiya S."/>
            <person name="Komai F."/>
            <person name="Hara R."/>
            <person name="Takeuchi K."/>
            <person name="Arita M."/>
            <person name="Imose N."/>
            <person name="Musashino K."/>
            <person name="Yuuki H."/>
            <person name="Oshima A."/>
            <person name="Sasaki N."/>
            <person name="Aotsuka S."/>
            <person name="Yoshikawa Y."/>
            <person name="Matsunawa H."/>
            <person name="Ichihara T."/>
            <person name="Shiohata N."/>
            <person name="Sano S."/>
            <person name="Moriya S."/>
            <person name="Momiyama H."/>
            <person name="Satoh N."/>
            <person name="Takami S."/>
            <person name="Terashima Y."/>
            <person name="Suzuki O."/>
            <person name="Nakagawa S."/>
            <person name="Senoh A."/>
            <person name="Mizoguchi H."/>
            <person name="Goto Y."/>
            <person name="Shimizu F."/>
            <person name="Wakebe H."/>
            <person name="Hishigaki H."/>
            <person name="Watanabe T."/>
            <person name="Sugiyama A."/>
            <person name="Takemoto M."/>
            <person name="Kawakami B."/>
            <person name="Yamazaki M."/>
            <person name="Watanabe K."/>
            <person name="Kumagai A."/>
            <person name="Itakura S."/>
            <person name="Fukuzumi Y."/>
            <person name="Fujimori Y."/>
            <person name="Komiyama M."/>
            <person name="Tashiro H."/>
            <person name="Tanigami A."/>
            <person name="Fujiwara T."/>
            <person name="Ono T."/>
            <person name="Yamada K."/>
            <person name="Fujii Y."/>
            <person name="Ozaki K."/>
            <person name="Hirao M."/>
            <person name="Ohmori Y."/>
            <person name="Kawabata A."/>
            <person name="Hikiji T."/>
            <person name="Kobatake N."/>
            <person name="Inagaki H."/>
            <person name="Ikema Y."/>
            <person name="Okamoto S."/>
            <person name="Okitani R."/>
            <person name="Kawakami T."/>
            <person name="Noguchi S."/>
            <person name="Itoh T."/>
            <person name="Shigeta K."/>
            <person name="Senba T."/>
            <person name="Matsumura K."/>
            <person name="Nakajima Y."/>
            <person name="Mizuno T."/>
            <person name="Morinaga M."/>
            <person name="Sasaki M."/>
            <person name="Togashi T."/>
            <person name="Oyama M."/>
            <person name="Hata H."/>
            <person name="Watanabe M."/>
            <person name="Komatsu T."/>
            <person name="Mizushima-Sugano J."/>
            <person name="Satoh T."/>
            <person name="Shirai Y."/>
            <person name="Takahashi Y."/>
            <person name="Nakagawa K."/>
            <person name="Okumura K."/>
            <person name="Nagase T."/>
            <person name="Nomura N."/>
            <person name="Kikuchi H."/>
            <person name="Masuho Y."/>
            <person name="Yamashita R."/>
            <person name="Nakai K."/>
            <person name="Yada T."/>
            <person name="Nakamura Y."/>
            <person name="Ohara O."/>
            <person name="Isogai T."/>
            <person name="Sugano S."/>
        </authorList>
    </citation>
    <scope>NUCLEOTIDE SEQUENCE [LARGE SCALE MRNA]</scope>
    <source>
        <tissue>Testis</tissue>
    </source>
</reference>
<reference key="3">
    <citation type="journal article" date="2003" name="Nature">
        <title>The DNA sequence and analysis of human chromosome 6.</title>
        <authorList>
            <person name="Mungall A.J."/>
            <person name="Palmer S.A."/>
            <person name="Sims S.K."/>
            <person name="Edwards C.A."/>
            <person name="Ashurst J.L."/>
            <person name="Wilming L."/>
            <person name="Jones M.C."/>
            <person name="Horton R."/>
            <person name="Hunt S.E."/>
            <person name="Scott C.E."/>
            <person name="Gilbert J.G.R."/>
            <person name="Clamp M.E."/>
            <person name="Bethel G."/>
            <person name="Milne S."/>
            <person name="Ainscough R."/>
            <person name="Almeida J.P."/>
            <person name="Ambrose K.D."/>
            <person name="Andrews T.D."/>
            <person name="Ashwell R.I.S."/>
            <person name="Babbage A.K."/>
            <person name="Bagguley C.L."/>
            <person name="Bailey J."/>
            <person name="Banerjee R."/>
            <person name="Barker D.J."/>
            <person name="Barlow K.F."/>
            <person name="Bates K."/>
            <person name="Beare D.M."/>
            <person name="Beasley H."/>
            <person name="Beasley O."/>
            <person name="Bird C.P."/>
            <person name="Blakey S.E."/>
            <person name="Bray-Allen S."/>
            <person name="Brook J."/>
            <person name="Brown A.J."/>
            <person name="Brown J.Y."/>
            <person name="Burford D.C."/>
            <person name="Burrill W."/>
            <person name="Burton J."/>
            <person name="Carder C."/>
            <person name="Carter N.P."/>
            <person name="Chapman J.C."/>
            <person name="Clark S.Y."/>
            <person name="Clark G."/>
            <person name="Clee C.M."/>
            <person name="Clegg S."/>
            <person name="Cobley V."/>
            <person name="Collier R.E."/>
            <person name="Collins J.E."/>
            <person name="Colman L.K."/>
            <person name="Corby N.R."/>
            <person name="Coville G.J."/>
            <person name="Culley K.M."/>
            <person name="Dhami P."/>
            <person name="Davies J."/>
            <person name="Dunn M."/>
            <person name="Earthrowl M.E."/>
            <person name="Ellington A.E."/>
            <person name="Evans K.A."/>
            <person name="Faulkner L."/>
            <person name="Francis M.D."/>
            <person name="Frankish A."/>
            <person name="Frankland J."/>
            <person name="French L."/>
            <person name="Garner P."/>
            <person name="Garnett J."/>
            <person name="Ghori M.J."/>
            <person name="Gilby L.M."/>
            <person name="Gillson C.J."/>
            <person name="Glithero R.J."/>
            <person name="Grafham D.V."/>
            <person name="Grant M."/>
            <person name="Gribble S."/>
            <person name="Griffiths C."/>
            <person name="Griffiths M.N.D."/>
            <person name="Hall R."/>
            <person name="Halls K.S."/>
            <person name="Hammond S."/>
            <person name="Harley J.L."/>
            <person name="Hart E.A."/>
            <person name="Heath P.D."/>
            <person name="Heathcott R."/>
            <person name="Holmes S.J."/>
            <person name="Howden P.J."/>
            <person name="Howe K.L."/>
            <person name="Howell G.R."/>
            <person name="Huckle E."/>
            <person name="Humphray S.J."/>
            <person name="Humphries M.D."/>
            <person name="Hunt A.R."/>
            <person name="Johnson C.M."/>
            <person name="Joy A.A."/>
            <person name="Kay M."/>
            <person name="Keenan S.J."/>
            <person name="Kimberley A.M."/>
            <person name="King A."/>
            <person name="Laird G.K."/>
            <person name="Langford C."/>
            <person name="Lawlor S."/>
            <person name="Leongamornlert D.A."/>
            <person name="Leversha M."/>
            <person name="Lloyd C.R."/>
            <person name="Lloyd D.M."/>
            <person name="Loveland J.E."/>
            <person name="Lovell J."/>
            <person name="Martin S."/>
            <person name="Mashreghi-Mohammadi M."/>
            <person name="Maslen G.L."/>
            <person name="Matthews L."/>
            <person name="McCann O.T."/>
            <person name="McLaren S.J."/>
            <person name="McLay K."/>
            <person name="McMurray A."/>
            <person name="Moore M.J.F."/>
            <person name="Mullikin J.C."/>
            <person name="Niblett D."/>
            <person name="Nickerson T."/>
            <person name="Novik K.L."/>
            <person name="Oliver K."/>
            <person name="Overton-Larty E.K."/>
            <person name="Parker A."/>
            <person name="Patel R."/>
            <person name="Pearce A.V."/>
            <person name="Peck A.I."/>
            <person name="Phillimore B.J.C.T."/>
            <person name="Phillips S."/>
            <person name="Plumb R.W."/>
            <person name="Porter K.M."/>
            <person name="Ramsey Y."/>
            <person name="Ranby S.A."/>
            <person name="Rice C.M."/>
            <person name="Ross M.T."/>
            <person name="Searle S.M."/>
            <person name="Sehra H.K."/>
            <person name="Sheridan E."/>
            <person name="Skuce C.D."/>
            <person name="Smith S."/>
            <person name="Smith M."/>
            <person name="Spraggon L."/>
            <person name="Squares S.L."/>
            <person name="Steward C.A."/>
            <person name="Sycamore N."/>
            <person name="Tamlyn-Hall G."/>
            <person name="Tester J."/>
            <person name="Theaker A.J."/>
            <person name="Thomas D.W."/>
            <person name="Thorpe A."/>
            <person name="Tracey A."/>
            <person name="Tromans A."/>
            <person name="Tubby B."/>
            <person name="Wall M."/>
            <person name="Wallis J.M."/>
            <person name="West A.P."/>
            <person name="White S.S."/>
            <person name="Whitehead S.L."/>
            <person name="Whittaker H."/>
            <person name="Wild A."/>
            <person name="Willey D.J."/>
            <person name="Wilmer T.E."/>
            <person name="Wood J.M."/>
            <person name="Wray P.W."/>
            <person name="Wyatt J.C."/>
            <person name="Young L."/>
            <person name="Younger R.M."/>
            <person name="Bentley D.R."/>
            <person name="Coulson A."/>
            <person name="Durbin R.M."/>
            <person name="Hubbard T."/>
            <person name="Sulston J.E."/>
            <person name="Dunham I."/>
            <person name="Rogers J."/>
            <person name="Beck S."/>
        </authorList>
    </citation>
    <scope>NUCLEOTIDE SEQUENCE [LARGE SCALE GENOMIC DNA]</scope>
</reference>
<reference key="4">
    <citation type="submission" date="2005-09" db="EMBL/GenBank/DDBJ databases">
        <authorList>
            <person name="Mural R.J."/>
            <person name="Istrail S."/>
            <person name="Sutton G.G."/>
            <person name="Florea L."/>
            <person name="Halpern A.L."/>
            <person name="Mobarry C.M."/>
            <person name="Lippert R."/>
            <person name="Walenz B."/>
            <person name="Shatkay H."/>
            <person name="Dew I."/>
            <person name="Miller J.R."/>
            <person name="Flanigan M.J."/>
            <person name="Edwards N.J."/>
            <person name="Bolanos R."/>
            <person name="Fasulo D."/>
            <person name="Halldorsson B.V."/>
            <person name="Hannenhalli S."/>
            <person name="Turner R."/>
            <person name="Yooseph S."/>
            <person name="Lu F."/>
            <person name="Nusskern D.R."/>
            <person name="Shue B.C."/>
            <person name="Zheng X.H."/>
            <person name="Zhong F."/>
            <person name="Delcher A.L."/>
            <person name="Huson D.H."/>
            <person name="Kravitz S.A."/>
            <person name="Mouchard L."/>
            <person name="Reinert K."/>
            <person name="Remington K.A."/>
            <person name="Clark A.G."/>
            <person name="Waterman M.S."/>
            <person name="Eichler E.E."/>
            <person name="Adams M.D."/>
            <person name="Hunkapiller M.W."/>
            <person name="Myers E.W."/>
            <person name="Venter J.C."/>
        </authorList>
    </citation>
    <scope>NUCLEOTIDE SEQUENCE [LARGE SCALE GENOMIC DNA]</scope>
</reference>
<reference key="5">
    <citation type="journal article" date="2004" name="Genome Res.">
        <title>The status, quality, and expansion of the NIH full-length cDNA project: the Mammalian Gene Collection (MGC).</title>
        <authorList>
            <consortium name="The MGC Project Team"/>
        </authorList>
    </citation>
    <scope>NUCLEOTIDE SEQUENCE [LARGE SCALE MRNA]</scope>
    <source>
        <tissue>Testis</tissue>
    </source>
</reference>
<name>SRS12_HUMAN</name>
<protein>
    <recommendedName>
        <fullName>Serine/arginine-rich splicing factor 12</fullName>
    </recommendedName>
    <alternativeName>
        <fullName>35 kDa SR repressor protein</fullName>
        <shortName>SRrp35</shortName>
    </alternativeName>
    <alternativeName>
        <fullName>Splicing factor, arginine/serine-rich 13B</fullName>
    </alternativeName>
    <alternativeName>
        <fullName>Splicing factor, arginine/serine-rich 19</fullName>
    </alternativeName>
</protein>
<keyword id="KW-0507">mRNA processing</keyword>
<keyword id="KW-0508">mRNA splicing</keyword>
<keyword id="KW-0539">Nucleus</keyword>
<keyword id="KW-1267">Proteomics identification</keyword>
<keyword id="KW-1185">Reference proteome</keyword>
<keyword id="KW-0694">RNA-binding</keyword>